<reference key="1">
    <citation type="journal article" date="2002" name="Lancet">
        <title>Genome and virulence determinants of high virulence community-acquired MRSA.</title>
        <authorList>
            <person name="Baba T."/>
            <person name="Takeuchi F."/>
            <person name="Kuroda M."/>
            <person name="Yuzawa H."/>
            <person name="Aoki K."/>
            <person name="Oguchi A."/>
            <person name="Nagai Y."/>
            <person name="Iwama N."/>
            <person name="Asano K."/>
            <person name="Naimi T."/>
            <person name="Kuroda H."/>
            <person name="Cui L."/>
            <person name="Yamamoto K."/>
            <person name="Hiramatsu K."/>
        </authorList>
    </citation>
    <scope>NUCLEOTIDE SEQUENCE [LARGE SCALE GENOMIC DNA]</scope>
    <source>
        <strain>MW2</strain>
    </source>
</reference>
<comment type="function">
    <text evidence="1">Cell surface-associated calcium-binding protein which plays an important role in adhesion and pathogenesis. Mediates interactions with components of the extracellular matrix such as host DSG1 to promote bacterial adhesion to host cells. Contributes to the resistance to killing by innate immune components such as neutrophils present in blood and thus attenuates bacterial clearance.</text>
</comment>
<comment type="subunit">
    <text evidence="1">Interacts with host DSG1; this interaction increases S.aureus adherence to keratinocytes.</text>
</comment>
<comment type="subcellular location">
    <subcellularLocation>
        <location evidence="3">Secreted</location>
        <location evidence="3">Cell wall</location>
        <topology evidence="3">Peptidoglycan-anchor</topology>
    </subcellularLocation>
    <text evidence="1">Anchored to the cell wall by sortase A (By similarity).</text>
</comment>
<comment type="similarity">
    <text evidence="5">Belongs to the serine-aspartate repeat-containing protein (SDr) family.</text>
</comment>
<accession>Q8NXX6</accession>
<organism>
    <name type="scientific">Staphylococcus aureus (strain MW2)</name>
    <dbReference type="NCBI Taxonomy" id="196620"/>
    <lineage>
        <taxon>Bacteria</taxon>
        <taxon>Bacillati</taxon>
        <taxon>Bacillota</taxon>
        <taxon>Bacilli</taxon>
        <taxon>Bacillales</taxon>
        <taxon>Staphylococcaceae</taxon>
        <taxon>Staphylococcus</taxon>
    </lineage>
</organism>
<name>SDRD_STAAW</name>
<protein>
    <recommendedName>
        <fullName>Serine-aspartate repeat-containing protein D</fullName>
    </recommendedName>
</protein>
<evidence type="ECO:0000250" key="1">
    <source>
        <dbReference type="UniProtKB" id="Q2G0L4"/>
    </source>
</evidence>
<evidence type="ECO:0000255" key="2"/>
<evidence type="ECO:0000255" key="3">
    <source>
        <dbReference type="PROSITE-ProRule" id="PRU00477"/>
    </source>
</evidence>
<evidence type="ECO:0000256" key="4">
    <source>
        <dbReference type="SAM" id="MobiDB-lite"/>
    </source>
</evidence>
<evidence type="ECO:0000305" key="5"/>
<keyword id="KW-0106">Calcium</keyword>
<keyword id="KW-0134">Cell wall</keyword>
<keyword id="KW-0572">Peptidoglycan-anchor</keyword>
<keyword id="KW-0677">Repeat</keyword>
<keyword id="KW-0964">Secreted</keyword>
<keyword id="KW-0732">Signal</keyword>
<feature type="signal peptide" evidence="2">
    <location>
        <begin position="1"/>
        <end position="35"/>
    </location>
</feature>
<feature type="chain" id="PRO_0000281214" description="Serine-aspartate repeat-containing protein D">
    <location>
        <begin position="36"/>
        <end position="1313"/>
    </location>
</feature>
<feature type="propeptide" id="PRO_0000281215" description="Removed by sortase" evidence="3">
    <location>
        <begin position="1314"/>
        <end position="1347"/>
    </location>
</feature>
<feature type="domain" description="CNA-B 1">
    <location>
        <begin position="569"/>
        <end position="680"/>
    </location>
</feature>
<feature type="domain" description="CNA-B 2">
    <location>
        <begin position="681"/>
        <end position="791"/>
    </location>
</feature>
<feature type="domain" description="CNA-B 3">
    <location>
        <begin position="792"/>
        <end position="901"/>
    </location>
</feature>
<feature type="domain" description="CNA-B 4">
    <location>
        <begin position="902"/>
        <end position="1012"/>
    </location>
</feature>
<feature type="domain" description="CNA-B 5">
    <location>
        <begin position="1013"/>
        <end position="1123"/>
    </location>
</feature>
<feature type="region of interest" description="Ligand binding A region">
    <location>
        <begin position="36"/>
        <end position="568"/>
    </location>
</feature>
<feature type="region of interest" description="Disordered" evidence="4">
    <location>
        <begin position="55"/>
        <end position="185"/>
    </location>
</feature>
<feature type="region of interest" description="Disordered" evidence="4">
    <location>
        <begin position="857"/>
        <end position="883"/>
    </location>
</feature>
<feature type="region of interest" description="Disordered" evidence="4">
    <location>
        <begin position="972"/>
        <end position="992"/>
    </location>
</feature>
<feature type="region of interest" description="Disordered" evidence="4">
    <location>
        <begin position="1078"/>
        <end position="1323"/>
    </location>
</feature>
<feature type="short sequence motif" description="YSIRK-G/S signaling motif" evidence="1">
    <location>
        <begin position="23"/>
        <end position="34"/>
    </location>
</feature>
<feature type="short sequence motif" description="LPXTG sorting signal" evidence="3">
    <location>
        <begin position="1310"/>
        <end position="1314"/>
    </location>
</feature>
<feature type="compositionally biased region" description="Polar residues" evidence="4">
    <location>
        <begin position="62"/>
        <end position="71"/>
    </location>
</feature>
<feature type="compositionally biased region" description="Polar residues" evidence="4">
    <location>
        <begin position="94"/>
        <end position="109"/>
    </location>
</feature>
<feature type="compositionally biased region" description="Basic and acidic residues" evidence="4">
    <location>
        <begin position="130"/>
        <end position="145"/>
    </location>
</feature>
<feature type="compositionally biased region" description="Polar residues" evidence="4">
    <location>
        <begin position="146"/>
        <end position="155"/>
    </location>
</feature>
<feature type="compositionally biased region" description="Polar residues" evidence="4">
    <location>
        <begin position="163"/>
        <end position="173"/>
    </location>
</feature>
<feature type="compositionally biased region" description="Basic and acidic residues" evidence="4">
    <location>
        <begin position="174"/>
        <end position="183"/>
    </location>
</feature>
<feature type="compositionally biased region" description="Polar residues" evidence="4">
    <location>
        <begin position="860"/>
        <end position="869"/>
    </location>
</feature>
<feature type="compositionally biased region" description="Polar residues" evidence="4">
    <location>
        <begin position="972"/>
        <end position="981"/>
    </location>
</feature>
<feature type="compositionally biased region" description="Acidic residues" evidence="4">
    <location>
        <begin position="1091"/>
        <end position="1101"/>
    </location>
</feature>
<feature type="compositionally biased region" description="Acidic residues" evidence="4">
    <location>
        <begin position="1118"/>
        <end position="1286"/>
    </location>
</feature>
<feature type="modified residue" description="Pentaglycyl murein peptidoglycan amidated threonine" evidence="3">
    <location>
        <position position="1313"/>
    </location>
</feature>
<sequence>MLNRENKTAITRKGMVSNRLNKFSIRKYTVGTASILVGTTLIFGLGNQEAKAAESTNKELNEATTSASDNQSSDKVDMQQLNQEDNTKNDNQKEMVSSQGNETTSNGNKSIEKESVQSTTGNKVEVSTAKSDEQASPKSTNEDLNTKQTISNQEALQPDLQENKSVVNAQPTNEENKKVDAKTESTTLNVKSDAIKSNAETLVDNNSNSNNENNADIILPKSTAPKRLNTRMRIAAVQPSSTEAKNVNDLITSNTTLTVVDADKNNKIVPAQDYLELKSQIKVDDKVKSGDYFTIKYSDTVQVYGLNPEDIKNIGDIKDPNNGETIATAKHDTANNLITYTFTDYVDRFNSVQMGINYSIYMDADTIPVSKNDVEFNVTIGNTTTKTTANIQYPDYVVNEKNSIGSAFTETVSHVGNKENPGYYKQTIYINPSENSLTNAKLKVQAYHSSYPNNIGQINKEVTDIKIYQVPKGYTLNKGYDVNTKELTDVTNQYLQKITYGDNNSAVIDFGNADSAYVVMVNTKFQYTTSESPTLVQMVTLSSDNSKSASMGNALGFTNNQSGGAGQEVYKIGNYVWEDTNKNGVQELGEKGVGNVTVTVFDNNTNTKVGEAVTKEDGSYLIPNLPNGDYRVEFSNLPKGYEVTPSKQGNNEELDSNGLSSVITVNGKDNLSADLGIYKPKYNLGDYVWEDTNKNGIQDQDEKGISGVTVTLKDENGNVLKTVTTDADGKYKFTDLDNGNYKVEFTTPEGYTPTTVTSGSDIEKDSNGLTTTGVINGADNMTLDSGFYKTPKYNLGNYVWEDTNKDGKQDSTEKGISGVTVTLKNENGEVLQTTKTDKDGKYQFTGLENGTYKVEFETPSGYTPTQVGSGTDEGIDSNGTSTTGVIKDKDNDTIDSGFYKPTYNLGDYVWEDTNKNGVQDKDEKGISGVTVTLKDENDKVLKTVTTDENGKYQFTDLNNGTYKVEFETPSGYTPTSVTSGNDTEKDSNGLTTTGVIKDADNMTLDSGFYKTSKYSLGDYVWYDSNKDGKQDSTEKGIKDVKVTLLNEKGEVIGTTKTDENGKYRFDNLDSGKYKVIFEKPAGLTQTGTNTTEDDKDADGGEVDVTITDHDDFTLDNGYFEEDTSDSDSDSDSDSDSDSDSDSDSDSDSDSDSDSDSDSDSDSDSDSDSDSDSDSDSDSDSDSDSDSDSDSDSDSDSDSDSDSDSDSDSDSDSDSDSDSDSDSDSDSDSDSESDSDSDSDSDSDSDSDSDSDSDSDSDSDSDSDSDSDSDSDSDSDSDSDSDSDSDSDAGKHTPVKPMSTTKDHHNKAKALPETGNENSGSNNATLFGGLFAALGSLLLFGRRKKQNK</sequence>
<gene>
    <name type="primary">sdrD</name>
    <name type="ordered locus">MW0517</name>
</gene>
<proteinExistence type="inferred from homology"/>
<dbReference type="EMBL" id="BA000033">
    <property type="protein sequence ID" value="BAB94382.1"/>
    <property type="molecule type" value="Genomic_DNA"/>
</dbReference>
<dbReference type="RefSeq" id="WP_000934435.1">
    <property type="nucleotide sequence ID" value="NC_003923.1"/>
</dbReference>
<dbReference type="SMR" id="Q8NXX6"/>
<dbReference type="KEGG" id="sam:MW0517"/>
<dbReference type="HOGENOM" id="CLU_004137_0_1_9"/>
<dbReference type="PRO" id="PR:Q8NXX6"/>
<dbReference type="GO" id="GO:0005576">
    <property type="term" value="C:extracellular region"/>
    <property type="evidence" value="ECO:0007669"/>
    <property type="project" value="UniProtKB-KW"/>
</dbReference>
<dbReference type="GO" id="GO:0007155">
    <property type="term" value="P:cell adhesion"/>
    <property type="evidence" value="ECO:0007669"/>
    <property type="project" value="InterPro"/>
</dbReference>
<dbReference type="Gene3D" id="2.60.40.1280">
    <property type="match status" value="1"/>
</dbReference>
<dbReference type="Gene3D" id="2.60.40.1290">
    <property type="match status" value="1"/>
</dbReference>
<dbReference type="Gene3D" id="2.60.40.10">
    <property type="entry name" value="Immunoglobulins"/>
    <property type="match status" value="5"/>
</dbReference>
<dbReference type="InterPro" id="IPR011266">
    <property type="entry name" value="Adhesin_Fg-bd_dom_2"/>
</dbReference>
<dbReference type="InterPro" id="IPR008966">
    <property type="entry name" value="Adhesion_dom_sf"/>
</dbReference>
<dbReference type="InterPro" id="IPR011252">
    <property type="entry name" value="Fibrogen-bd_dom1"/>
</dbReference>
<dbReference type="InterPro" id="IPR013783">
    <property type="entry name" value="Ig-like_fold"/>
</dbReference>
<dbReference type="InterPro" id="IPR019931">
    <property type="entry name" value="LPXTG_anchor"/>
</dbReference>
<dbReference type="InterPro" id="IPR051417">
    <property type="entry name" value="SDr/BOS_complex"/>
</dbReference>
<dbReference type="InterPro" id="IPR033764">
    <property type="entry name" value="Sdr_B"/>
</dbReference>
<dbReference type="InterPro" id="IPR041171">
    <property type="entry name" value="SDR_Ig"/>
</dbReference>
<dbReference type="InterPro" id="IPR005877">
    <property type="entry name" value="YSIRK_signal_dom"/>
</dbReference>
<dbReference type="NCBIfam" id="TIGR01167">
    <property type="entry name" value="LPXTG_anchor"/>
    <property type="match status" value="1"/>
</dbReference>
<dbReference type="NCBIfam" id="NF012181">
    <property type="entry name" value="MSCRAMM_SdrD"/>
    <property type="match status" value="1"/>
</dbReference>
<dbReference type="NCBIfam" id="TIGR01168">
    <property type="entry name" value="YSIRK_signal"/>
    <property type="match status" value="1"/>
</dbReference>
<dbReference type="PANTHER" id="PTHR23303">
    <property type="entry name" value="CARBOXYPEPTIDASE REGULATORY REGION-CONTAINING"/>
    <property type="match status" value="1"/>
</dbReference>
<dbReference type="PANTHER" id="PTHR23303:SF15">
    <property type="entry name" value="COLOSSIN-A"/>
    <property type="match status" value="1"/>
</dbReference>
<dbReference type="Pfam" id="PF17961">
    <property type="entry name" value="Big_8"/>
    <property type="match status" value="1"/>
</dbReference>
<dbReference type="Pfam" id="PF00746">
    <property type="entry name" value="Gram_pos_anchor"/>
    <property type="match status" value="1"/>
</dbReference>
<dbReference type="Pfam" id="PF17210">
    <property type="entry name" value="SdrD_B"/>
    <property type="match status" value="5"/>
</dbReference>
<dbReference type="Pfam" id="PF10425">
    <property type="entry name" value="SdrG_C_C"/>
    <property type="match status" value="1"/>
</dbReference>
<dbReference type="Pfam" id="PF04650">
    <property type="entry name" value="YSIRK_signal"/>
    <property type="match status" value="1"/>
</dbReference>
<dbReference type="SUPFAM" id="SSF49401">
    <property type="entry name" value="Bacterial adhesins"/>
    <property type="match status" value="2"/>
</dbReference>
<dbReference type="SUPFAM" id="SSF117074">
    <property type="entry name" value="Hypothetical protein PA1324"/>
    <property type="match status" value="5"/>
</dbReference>
<dbReference type="PROSITE" id="PS50847">
    <property type="entry name" value="GRAM_POS_ANCHORING"/>
    <property type="match status" value="1"/>
</dbReference>